<organism evidence="6">
    <name type="scientific">Drosophila melanogaster</name>
    <name type="common">Fruit fly</name>
    <dbReference type="NCBI Taxonomy" id="7227"/>
    <lineage>
        <taxon>Eukaryota</taxon>
        <taxon>Metazoa</taxon>
        <taxon>Ecdysozoa</taxon>
        <taxon>Arthropoda</taxon>
        <taxon>Hexapoda</taxon>
        <taxon>Insecta</taxon>
        <taxon>Pterygota</taxon>
        <taxon>Neoptera</taxon>
        <taxon>Endopterygota</taxon>
        <taxon>Diptera</taxon>
        <taxon>Brachycera</taxon>
        <taxon>Muscomorpha</taxon>
        <taxon>Ephydroidea</taxon>
        <taxon>Drosophilidae</taxon>
        <taxon>Drosophila</taxon>
        <taxon>Sophophora</taxon>
    </lineage>
</organism>
<gene>
    <name type="primary">Nach</name>
    <name type="synonym">PPK4</name>
    <name type="ORF">CG8178</name>
</gene>
<proteinExistence type="evidence at transcript level"/>
<accession>O61365</accession>
<accession>Q7KRC7</accession>
<accession>Q86LH4</accession>
<accession>Q9V7S4</accession>
<name>NACH_DROME</name>
<sequence length="535" mass="62330">MGHQEELKPEQVDLKVTPFVGYLRRTWSDFCATSSIHGLKYTRDEDTNKIVHLVWLLISVVMFICAVVMARTFYMDYRSSPTRMNVESDNTPVNRLYFPPVTICPDVLFNMQKSEAFLNTLRLPKGAELRGILRKLHIFYGFMLDDERYSAEDIEQMEALLFLNNLTIPEFVEHLRWNCDEILYRCRFNGEIMDCSKIFQLSKTFFGHCCSFNLRQKGWVNNKLNNLESFKVFHLNSLNFTAQRAIGGLRYGLSVVVRYKDDNYDPLQSYSYGVKLLIQEADAFPSAHSAAKFIAFNSETFAAVRPQETFCSSAVKALIIEERNCVFQNEFPMRYFSDYVYPNCELNCRVTNMVKFCGCHTYFFDFNRTSDRICTFRDIPCLVDNFANIITRKKSTQCYCPLTCEHIDYDVQLTNFPLELNMPVADKFYSGLAKNDGVLHVFINSFSYRRLRRDLLSNMVTLVSNLGSAFSLFVGMSMLSVVEIIYYFSVILRKNYKLECETRSQMLHKKPKFAWPKANDTHSKEQKSVFIIHKS</sequence>
<protein>
    <recommendedName>
        <fullName>Sodium channel protein Nach</fullName>
    </recommendedName>
    <alternativeName>
        <fullName>Pickpocket protein 4</fullName>
    </alternativeName>
</protein>
<comment type="function">
    <text evidence="3 4">Part of a complex that plays a role in tracheal liquid clearance. Probable role in sodium transport.</text>
</comment>
<comment type="subcellular location">
    <subcellularLocation>
        <location>Membrane</location>
        <topology>Multi-pass membrane protein</topology>
    </subcellularLocation>
</comment>
<comment type="alternative products">
    <event type="alternative splicing"/>
    <isoform>
        <id>O61365-1</id>
        <name evidence="3">B</name>
        <name>PPK4L</name>
        <sequence type="displayed"/>
    </isoform>
    <isoform>
        <id>O61365-2</id>
        <name evidence="5">A</name>
        <sequence type="described" ref="VSP_008551"/>
    </isoform>
    <isoform>
        <id>O61365-3</id>
        <name>C</name>
        <sequence type="described" ref="VSP_011421"/>
    </isoform>
</comment>
<comment type="tissue specificity">
    <text evidence="3">Embryonic and larval tracheal system; dorsal trunk (but not at fusion with transverse connective), several branches and terminal cells. Also expressed in adult tracheal system; dorsal trunk, but not at the spiracles.</text>
</comment>
<comment type="similarity">
    <text evidence="5">Belongs to the amiloride-sensitive sodium channel (TC 1.A.6) family.</text>
</comment>
<keyword id="KW-0025">Alternative splicing</keyword>
<keyword id="KW-0325">Glycoprotein</keyword>
<keyword id="KW-0407">Ion channel</keyword>
<keyword id="KW-0406">Ion transport</keyword>
<keyword id="KW-0472">Membrane</keyword>
<keyword id="KW-1185">Reference proteome</keyword>
<keyword id="KW-0915">Sodium</keyword>
<keyword id="KW-0894">Sodium channel</keyword>
<keyword id="KW-0739">Sodium transport</keyword>
<keyword id="KW-0812">Transmembrane</keyword>
<keyword id="KW-1133">Transmembrane helix</keyword>
<keyword id="KW-0813">Transport</keyword>
<feature type="chain" id="PRO_0000181310" description="Sodium channel protein Nach">
    <location>
        <begin position="1"/>
        <end position="535"/>
    </location>
</feature>
<feature type="topological domain" description="Cytoplasmic" evidence="1">
    <location>
        <begin position="1"/>
        <end position="49"/>
    </location>
</feature>
<feature type="transmembrane region" description="Helical" evidence="1">
    <location>
        <begin position="50"/>
        <end position="70"/>
    </location>
</feature>
<feature type="topological domain" description="Extracellular" evidence="1">
    <location>
        <begin position="71"/>
        <end position="471"/>
    </location>
</feature>
<feature type="transmembrane region" description="Helical" evidence="1">
    <location>
        <begin position="472"/>
        <end position="492"/>
    </location>
</feature>
<feature type="topological domain" description="Cytoplasmic" evidence="1">
    <location>
        <begin position="493"/>
        <end position="535"/>
    </location>
</feature>
<feature type="glycosylation site" description="N-linked (GlcNAc...) asparagine" evidence="1">
    <location>
        <position position="165"/>
    </location>
</feature>
<feature type="glycosylation site" description="N-linked (GlcNAc...) asparagine" evidence="1">
    <location>
        <position position="239"/>
    </location>
</feature>
<feature type="glycosylation site" description="N-linked (GlcNAc...) asparagine" evidence="1">
    <location>
        <position position="367"/>
    </location>
</feature>
<feature type="splice variant" id="VSP_008551" description="In isoform A." evidence="5">
    <location>
        <begin position="219"/>
        <end position="237"/>
    </location>
</feature>
<feature type="splice variant" id="VSP_011421" description="In isoform C." evidence="5">
    <original>F</original>
    <variation>FGRLLLICSKYSDFNRLLS</variation>
    <location>
        <position position="386"/>
    </location>
</feature>
<feature type="sequence conflict" description="In Ref. 1; AAD09149." evidence="5" ref="1">
    <original>Y</original>
    <variation>S</variation>
    <location>
        <position position="22"/>
    </location>
</feature>
<feature type="sequence conflict" description="In Ref. 1; AAD09149." evidence="5" ref="1">
    <original>S</original>
    <variation>L</variation>
    <location>
        <position position="269"/>
    </location>
</feature>
<feature type="sequence conflict" description="In Ref. 1; AAD09149." evidence="5" ref="1">
    <original>S</original>
    <variation>F</variation>
    <location>
        <position position="289"/>
    </location>
</feature>
<feature type="sequence conflict" description="In Ref. 1; AAD09149." evidence="5" ref="1">
    <original>SS</original>
    <variation>FF</variation>
    <location>
        <begin position="312"/>
        <end position="313"/>
    </location>
</feature>
<feature type="sequence conflict" description="In Ref. 1; AAD09149." evidence="5" ref="1">
    <original>D</original>
    <variation>A</variation>
    <location>
        <position position="365"/>
    </location>
</feature>
<reference evidence="5" key="1">
    <citation type="submission" date="1997-09" db="EMBL/GenBank/DDBJ databases">
        <authorList>
            <person name="Da Lage J.-L."/>
        </authorList>
    </citation>
    <scope>NUCLEOTIDE SEQUENCE (ISOFORM A)</scope>
    <source>
        <strain evidence="5">Canton-S</strain>
    </source>
</reference>
<reference evidence="5" key="2">
    <citation type="journal article" date="2003" name="Proc. Natl. Acad. Sci. U.S.A.">
        <title>Drosophila DEG/ENaC pickpocket genes are expressed in the tracheal system, where they may be involved in liquid clearance.</title>
        <authorList>
            <person name="Liu L."/>
            <person name="Johnson W.A."/>
            <person name="Welsh M.J."/>
        </authorList>
    </citation>
    <scope>NUCLEOTIDE SEQUENCE [MRNA] (ISOFORM B)</scope>
    <scope>FUNCTION</scope>
    <scope>TISSUE SPECIFICITY</scope>
</reference>
<reference evidence="5" key="3">
    <citation type="journal article" date="2000" name="Science">
        <title>The genome sequence of Drosophila melanogaster.</title>
        <authorList>
            <person name="Adams M.D."/>
            <person name="Celniker S.E."/>
            <person name="Holt R.A."/>
            <person name="Evans C.A."/>
            <person name="Gocayne J.D."/>
            <person name="Amanatides P.G."/>
            <person name="Scherer S.E."/>
            <person name="Li P.W."/>
            <person name="Hoskins R.A."/>
            <person name="Galle R.F."/>
            <person name="George R.A."/>
            <person name="Lewis S.E."/>
            <person name="Richards S."/>
            <person name="Ashburner M."/>
            <person name="Henderson S.N."/>
            <person name="Sutton G.G."/>
            <person name="Wortman J.R."/>
            <person name="Yandell M.D."/>
            <person name="Zhang Q."/>
            <person name="Chen L.X."/>
            <person name="Brandon R.C."/>
            <person name="Rogers Y.-H.C."/>
            <person name="Blazej R.G."/>
            <person name="Champe M."/>
            <person name="Pfeiffer B.D."/>
            <person name="Wan K.H."/>
            <person name="Doyle C."/>
            <person name="Baxter E.G."/>
            <person name="Helt G."/>
            <person name="Nelson C.R."/>
            <person name="Miklos G.L.G."/>
            <person name="Abril J.F."/>
            <person name="Agbayani A."/>
            <person name="An H.-J."/>
            <person name="Andrews-Pfannkoch C."/>
            <person name="Baldwin D."/>
            <person name="Ballew R.M."/>
            <person name="Basu A."/>
            <person name="Baxendale J."/>
            <person name="Bayraktaroglu L."/>
            <person name="Beasley E.M."/>
            <person name="Beeson K.Y."/>
            <person name="Benos P.V."/>
            <person name="Berman B.P."/>
            <person name="Bhandari D."/>
            <person name="Bolshakov S."/>
            <person name="Borkova D."/>
            <person name="Botchan M.R."/>
            <person name="Bouck J."/>
            <person name="Brokstein P."/>
            <person name="Brottier P."/>
            <person name="Burtis K.C."/>
            <person name="Busam D.A."/>
            <person name="Butler H."/>
            <person name="Cadieu E."/>
            <person name="Center A."/>
            <person name="Chandra I."/>
            <person name="Cherry J.M."/>
            <person name="Cawley S."/>
            <person name="Dahlke C."/>
            <person name="Davenport L.B."/>
            <person name="Davies P."/>
            <person name="de Pablos B."/>
            <person name="Delcher A."/>
            <person name="Deng Z."/>
            <person name="Mays A.D."/>
            <person name="Dew I."/>
            <person name="Dietz S.M."/>
            <person name="Dodson K."/>
            <person name="Doup L.E."/>
            <person name="Downes M."/>
            <person name="Dugan-Rocha S."/>
            <person name="Dunkov B.C."/>
            <person name="Dunn P."/>
            <person name="Durbin K.J."/>
            <person name="Evangelista C.C."/>
            <person name="Ferraz C."/>
            <person name="Ferriera S."/>
            <person name="Fleischmann W."/>
            <person name="Fosler C."/>
            <person name="Gabrielian A.E."/>
            <person name="Garg N.S."/>
            <person name="Gelbart W.M."/>
            <person name="Glasser K."/>
            <person name="Glodek A."/>
            <person name="Gong F."/>
            <person name="Gorrell J.H."/>
            <person name="Gu Z."/>
            <person name="Guan P."/>
            <person name="Harris M."/>
            <person name="Harris N.L."/>
            <person name="Harvey D.A."/>
            <person name="Heiman T.J."/>
            <person name="Hernandez J.R."/>
            <person name="Houck J."/>
            <person name="Hostin D."/>
            <person name="Houston K.A."/>
            <person name="Howland T.J."/>
            <person name="Wei M.-H."/>
            <person name="Ibegwam C."/>
            <person name="Jalali M."/>
            <person name="Kalush F."/>
            <person name="Karpen G.H."/>
            <person name="Ke Z."/>
            <person name="Kennison J.A."/>
            <person name="Ketchum K.A."/>
            <person name="Kimmel B.E."/>
            <person name="Kodira C.D."/>
            <person name="Kraft C.L."/>
            <person name="Kravitz S."/>
            <person name="Kulp D."/>
            <person name="Lai Z."/>
            <person name="Lasko P."/>
            <person name="Lei Y."/>
            <person name="Levitsky A.A."/>
            <person name="Li J.H."/>
            <person name="Li Z."/>
            <person name="Liang Y."/>
            <person name="Lin X."/>
            <person name="Liu X."/>
            <person name="Mattei B."/>
            <person name="McIntosh T.C."/>
            <person name="McLeod M.P."/>
            <person name="McPherson D."/>
            <person name="Merkulov G."/>
            <person name="Milshina N.V."/>
            <person name="Mobarry C."/>
            <person name="Morris J."/>
            <person name="Moshrefi A."/>
            <person name="Mount S.M."/>
            <person name="Moy M."/>
            <person name="Murphy B."/>
            <person name="Murphy L."/>
            <person name="Muzny D.M."/>
            <person name="Nelson D.L."/>
            <person name="Nelson D.R."/>
            <person name="Nelson K.A."/>
            <person name="Nixon K."/>
            <person name="Nusskern D.R."/>
            <person name="Pacleb J.M."/>
            <person name="Palazzolo M."/>
            <person name="Pittman G.S."/>
            <person name="Pan S."/>
            <person name="Pollard J."/>
            <person name="Puri V."/>
            <person name="Reese M.G."/>
            <person name="Reinert K."/>
            <person name="Remington K."/>
            <person name="Saunders R.D.C."/>
            <person name="Scheeler F."/>
            <person name="Shen H."/>
            <person name="Shue B.C."/>
            <person name="Siden-Kiamos I."/>
            <person name="Simpson M."/>
            <person name="Skupski M.P."/>
            <person name="Smith T.J."/>
            <person name="Spier E."/>
            <person name="Spradling A.C."/>
            <person name="Stapleton M."/>
            <person name="Strong R."/>
            <person name="Sun E."/>
            <person name="Svirskas R."/>
            <person name="Tector C."/>
            <person name="Turner R."/>
            <person name="Venter E."/>
            <person name="Wang A.H."/>
            <person name="Wang X."/>
            <person name="Wang Z.-Y."/>
            <person name="Wassarman D.A."/>
            <person name="Weinstock G.M."/>
            <person name="Weissenbach J."/>
            <person name="Williams S.M."/>
            <person name="Woodage T."/>
            <person name="Worley K.C."/>
            <person name="Wu D."/>
            <person name="Yang S."/>
            <person name="Yao Q.A."/>
            <person name="Ye J."/>
            <person name="Yeh R.-F."/>
            <person name="Zaveri J.S."/>
            <person name="Zhan M."/>
            <person name="Zhang G."/>
            <person name="Zhao Q."/>
            <person name="Zheng L."/>
            <person name="Zheng X.H."/>
            <person name="Zhong F.N."/>
            <person name="Zhong W."/>
            <person name="Zhou X."/>
            <person name="Zhu S.C."/>
            <person name="Zhu X."/>
            <person name="Smith H.O."/>
            <person name="Gibbs R.A."/>
            <person name="Myers E.W."/>
            <person name="Rubin G.M."/>
            <person name="Venter J.C."/>
        </authorList>
    </citation>
    <scope>NUCLEOTIDE SEQUENCE [LARGE SCALE GENOMIC DNA]</scope>
    <source>
        <strain evidence="2">Berkeley</strain>
    </source>
</reference>
<reference key="4">
    <citation type="journal article" date="2002" name="Genome Biol.">
        <title>Annotation of the Drosophila melanogaster euchromatic genome: a systematic review.</title>
        <authorList>
            <person name="Misra S."/>
            <person name="Crosby M.A."/>
            <person name="Mungall C.J."/>
            <person name="Matthews B.B."/>
            <person name="Campbell K.S."/>
            <person name="Hradecky P."/>
            <person name="Huang Y."/>
            <person name="Kaminker J.S."/>
            <person name="Millburn G.H."/>
            <person name="Prochnik S.E."/>
            <person name="Smith C.D."/>
            <person name="Tupy J.L."/>
            <person name="Whitfield E.J."/>
            <person name="Bayraktaroglu L."/>
            <person name="Berman B.P."/>
            <person name="Bettencourt B.R."/>
            <person name="Celniker S.E."/>
            <person name="de Grey A.D.N.J."/>
            <person name="Drysdale R.A."/>
            <person name="Harris N.L."/>
            <person name="Richter J."/>
            <person name="Russo S."/>
            <person name="Schroeder A.J."/>
            <person name="Shu S.Q."/>
            <person name="Stapleton M."/>
            <person name="Yamada C."/>
            <person name="Ashburner M."/>
            <person name="Gelbart W.M."/>
            <person name="Rubin G.M."/>
            <person name="Lewis S.E."/>
        </authorList>
    </citation>
    <scope>GENOME REANNOTATION</scope>
    <scope>ALTERNATIVE SPLICING</scope>
    <source>
        <strain>Berkeley</strain>
    </source>
</reference>
<dbReference type="EMBL" id="AF022713">
    <property type="protein sequence ID" value="AAD09149.1"/>
    <property type="molecule type" value="Genomic_DNA"/>
</dbReference>
<dbReference type="EMBL" id="AY226538">
    <property type="protein sequence ID" value="AAO47364.1"/>
    <property type="molecule type" value="mRNA"/>
</dbReference>
<dbReference type="EMBL" id="AE013599">
    <property type="protein sequence ID" value="AAF57970.1"/>
    <property type="molecule type" value="Genomic_DNA"/>
</dbReference>
<dbReference type="EMBL" id="AE013599">
    <property type="protein sequence ID" value="AAS64839.1"/>
    <property type="molecule type" value="Genomic_DNA"/>
</dbReference>
<dbReference type="EMBL" id="AE013599">
    <property type="protein sequence ID" value="AAS64840.1"/>
    <property type="molecule type" value="Genomic_DNA"/>
</dbReference>
<dbReference type="RefSeq" id="NP_001334723.1">
    <molecule id="O61365-1"/>
    <property type="nucleotide sequence ID" value="NM_001347816.1"/>
</dbReference>
<dbReference type="RefSeq" id="NP_001334724.1">
    <molecule id="O61365-3"/>
    <property type="nucleotide sequence ID" value="NM_001347817.1"/>
</dbReference>
<dbReference type="RefSeq" id="NP_611145.1">
    <molecule id="O61365-2"/>
    <property type="nucleotide sequence ID" value="NM_137301.1"/>
</dbReference>
<dbReference type="BioGRID" id="62576">
    <property type="interactions" value="1"/>
</dbReference>
<dbReference type="FunCoup" id="O61365">
    <property type="interactions" value="26"/>
</dbReference>
<dbReference type="STRING" id="7227.FBpp0401613"/>
<dbReference type="TCDB" id="1.A.6.4.3">
    <property type="family name" value="the epithelial na(+) channel (enac) family"/>
</dbReference>
<dbReference type="GlyCosmos" id="O61365">
    <property type="glycosylation" value="3 sites, No reported glycans"/>
</dbReference>
<dbReference type="GlyGen" id="O61365">
    <property type="glycosylation" value="3 sites"/>
</dbReference>
<dbReference type="PaxDb" id="7227-FBpp0088959"/>
<dbReference type="EnsemblMetazoa" id="FBtr0087116">
    <molecule id="O61365-2"/>
    <property type="protein sequence ID" value="FBpp0086262"/>
    <property type="gene ID" value="FBgn0024319"/>
</dbReference>
<dbReference type="EnsemblMetazoa" id="FBtr0445749">
    <molecule id="O61365-1"/>
    <property type="protein sequence ID" value="FBpp0401612"/>
    <property type="gene ID" value="FBgn0024319"/>
</dbReference>
<dbReference type="EnsemblMetazoa" id="FBtr0445750">
    <molecule id="O61365-3"/>
    <property type="protein sequence ID" value="FBpp0401613"/>
    <property type="gene ID" value="FBgn0024319"/>
</dbReference>
<dbReference type="GeneID" id="36864"/>
<dbReference type="KEGG" id="dme:Dmel_CG8178"/>
<dbReference type="AGR" id="FB:FBgn0024319"/>
<dbReference type="CTD" id="36864"/>
<dbReference type="FlyBase" id="FBgn0024319">
    <property type="gene designation" value="Nach"/>
</dbReference>
<dbReference type="VEuPathDB" id="VectorBase:FBgn0024319"/>
<dbReference type="eggNOG" id="KOG4294">
    <property type="taxonomic scope" value="Eukaryota"/>
</dbReference>
<dbReference type="GeneTree" id="ENSGT00940000172566"/>
<dbReference type="HOGENOM" id="CLU_024950_1_1_1"/>
<dbReference type="InParanoid" id="O61365"/>
<dbReference type="OMA" id="HFDYDVQ"/>
<dbReference type="OrthoDB" id="6502088at2759"/>
<dbReference type="PhylomeDB" id="O61365"/>
<dbReference type="Reactome" id="R-DME-2672351">
    <property type="pathway name" value="Stimuli-sensing channels"/>
</dbReference>
<dbReference type="BioGRID-ORCS" id="36864">
    <property type="hits" value="0 hits in 1 CRISPR screen"/>
</dbReference>
<dbReference type="GenomeRNAi" id="36864"/>
<dbReference type="PRO" id="PR:O61365"/>
<dbReference type="Proteomes" id="UP000000803">
    <property type="component" value="Chromosome 2R"/>
</dbReference>
<dbReference type="Bgee" id="FBgn0024319">
    <property type="expression patterns" value="Expressed in adult anterior midgut class I enteroendocrine cell in adult midgut (Drosophila) and 8 other cell types or tissues"/>
</dbReference>
<dbReference type="ExpressionAtlas" id="O61365">
    <property type="expression patterns" value="baseline and differential"/>
</dbReference>
<dbReference type="GO" id="GO:0016020">
    <property type="term" value="C:membrane"/>
    <property type="evidence" value="ECO:0000250"/>
    <property type="project" value="FlyBase"/>
</dbReference>
<dbReference type="GO" id="GO:0005886">
    <property type="term" value="C:plasma membrane"/>
    <property type="evidence" value="ECO:0000318"/>
    <property type="project" value="GO_Central"/>
</dbReference>
<dbReference type="GO" id="GO:0015280">
    <property type="term" value="F:ligand-gated sodium channel activity"/>
    <property type="evidence" value="ECO:0000318"/>
    <property type="project" value="GO_Central"/>
</dbReference>
<dbReference type="GO" id="GO:0005272">
    <property type="term" value="F:sodium channel activity"/>
    <property type="evidence" value="ECO:0000250"/>
    <property type="project" value="FlyBase"/>
</dbReference>
<dbReference type="GO" id="GO:0015081">
    <property type="term" value="F:sodium ion transmembrane transporter activity"/>
    <property type="evidence" value="ECO:0000315"/>
    <property type="project" value="FlyBase"/>
</dbReference>
<dbReference type="GO" id="GO:0036335">
    <property type="term" value="P:intestinal stem cell homeostasis"/>
    <property type="evidence" value="ECO:0000315"/>
    <property type="project" value="FlyBase"/>
</dbReference>
<dbReference type="GO" id="GO:0009992">
    <property type="term" value="P:intracellular water homeostasis"/>
    <property type="evidence" value="ECO:0000315"/>
    <property type="project" value="FlyBase"/>
</dbReference>
<dbReference type="GO" id="GO:0035002">
    <property type="term" value="P:liquid clearance, open tracheal system"/>
    <property type="evidence" value="ECO:0000315"/>
    <property type="project" value="UniProtKB"/>
</dbReference>
<dbReference type="GO" id="GO:0035725">
    <property type="term" value="P:sodium ion transmembrane transport"/>
    <property type="evidence" value="ECO:0000315"/>
    <property type="project" value="FlyBase"/>
</dbReference>
<dbReference type="GO" id="GO:0006814">
    <property type="term" value="P:sodium ion transport"/>
    <property type="evidence" value="ECO:0000250"/>
    <property type="project" value="FlyBase"/>
</dbReference>
<dbReference type="FunFam" id="2.60.470.10:FF:000016">
    <property type="entry name" value="Sodium channel protein Nach"/>
    <property type="match status" value="1"/>
</dbReference>
<dbReference type="Gene3D" id="2.60.470.10">
    <property type="entry name" value="Acid-sensing ion channels like domains"/>
    <property type="match status" value="1"/>
</dbReference>
<dbReference type="Gene3D" id="1.10.287.770">
    <property type="entry name" value="YojJ-like"/>
    <property type="match status" value="1"/>
</dbReference>
<dbReference type="InterPro" id="IPR001873">
    <property type="entry name" value="ENaC"/>
</dbReference>
<dbReference type="InterPro" id="IPR020903">
    <property type="entry name" value="ENaC_CS"/>
</dbReference>
<dbReference type="PANTHER" id="PTHR11690">
    <property type="entry name" value="AMILORIDE-SENSITIVE SODIUM CHANNEL-RELATED"/>
    <property type="match status" value="1"/>
</dbReference>
<dbReference type="PANTHER" id="PTHR11690:SF237">
    <property type="entry name" value="PICKPOCKET 16-RELATED"/>
    <property type="match status" value="1"/>
</dbReference>
<dbReference type="Pfam" id="PF00858">
    <property type="entry name" value="ASC"/>
    <property type="match status" value="1"/>
</dbReference>
<dbReference type="PRINTS" id="PR01078">
    <property type="entry name" value="AMINACHANNEL"/>
</dbReference>
<dbReference type="PROSITE" id="PS01206">
    <property type="entry name" value="ASC"/>
    <property type="match status" value="1"/>
</dbReference>
<evidence type="ECO:0000255" key="1"/>
<evidence type="ECO:0000269" key="2">
    <source>
    </source>
</evidence>
<evidence type="ECO:0000269" key="3">
    <source>
    </source>
</evidence>
<evidence type="ECO:0000303" key="4">
    <source>
    </source>
</evidence>
<evidence type="ECO:0000305" key="5"/>
<evidence type="ECO:0000312" key="6">
    <source>
        <dbReference type="EMBL" id="AAO47364.1"/>
    </source>
</evidence>